<gene>
    <name type="ordered locus">MPN_554</name>
    <name type="ORF">G12_orf104</name>
    <name type="ORF">MP288</name>
</gene>
<keyword id="KW-0002">3D-structure</keyword>
<keyword id="KW-1185">Reference proteome</keyword>
<organism>
    <name type="scientific">Mycoplasma pneumoniae (strain ATCC 29342 / M129 / Subtype 1)</name>
    <name type="common">Mycoplasmoides pneumoniae</name>
    <dbReference type="NCBI Taxonomy" id="272634"/>
    <lineage>
        <taxon>Bacteria</taxon>
        <taxon>Bacillati</taxon>
        <taxon>Mycoplasmatota</taxon>
        <taxon>Mycoplasmoidales</taxon>
        <taxon>Mycoplasmoidaceae</taxon>
        <taxon>Mycoplasmoides</taxon>
    </lineage>
</organism>
<protein>
    <recommendedName>
        <fullName>Uncharacterized protein MG376 homolog</fullName>
    </recommendedName>
</protein>
<reference key="1">
    <citation type="journal article" date="1996" name="Nucleic Acids Res.">
        <title>Complete sequence analysis of the genome of the bacterium Mycoplasma pneumoniae.</title>
        <authorList>
            <person name="Himmelreich R."/>
            <person name="Hilbert H."/>
            <person name="Plagens H."/>
            <person name="Pirkl E."/>
            <person name="Li B.-C."/>
            <person name="Herrmann R."/>
        </authorList>
    </citation>
    <scope>NUCLEOTIDE SEQUENCE [LARGE SCALE GENOMIC DNA]</scope>
    <source>
        <strain>ATCC 29342 / M129 / Subtype 1</strain>
    </source>
</reference>
<name>Y554_MYCPN</name>
<feature type="chain" id="PRO_0000210579" description="Uncharacterized protein MG376 homolog">
    <location>
        <begin position="1"/>
        <end position="104"/>
    </location>
</feature>
<feature type="strand" evidence="1">
    <location>
        <begin position="3"/>
        <end position="16"/>
    </location>
</feature>
<feature type="strand" evidence="1">
    <location>
        <begin position="21"/>
        <end position="33"/>
    </location>
</feature>
<feature type="strand" evidence="1">
    <location>
        <begin position="36"/>
        <end position="47"/>
    </location>
</feature>
<feature type="helix" evidence="1">
    <location>
        <begin position="48"/>
        <end position="58"/>
    </location>
</feature>
<feature type="strand" evidence="1">
    <location>
        <begin position="62"/>
        <end position="75"/>
    </location>
</feature>
<feature type="turn" evidence="1">
    <location>
        <begin position="76"/>
        <end position="79"/>
    </location>
</feature>
<feature type="strand" evidence="1">
    <location>
        <begin position="80"/>
        <end position="90"/>
    </location>
</feature>
<sequence>MLNRVFLEGEIESSCWSVKKTGFLVTIKQMRFFGERLFTDYYVIYANGQLAYELEKHTKKYKTISIEGILRTYLERKSEIWKTTIEIVKIFNPKNEIVIDYKEI</sequence>
<proteinExistence type="evidence at protein level"/>
<evidence type="ECO:0007829" key="1">
    <source>
        <dbReference type="PDB" id="2HQL"/>
    </source>
</evidence>
<dbReference type="EMBL" id="U00089">
    <property type="protein sequence ID" value="AAB95936.1"/>
    <property type="molecule type" value="Genomic_DNA"/>
</dbReference>
<dbReference type="PIR" id="S73614">
    <property type="entry name" value="S73614"/>
</dbReference>
<dbReference type="RefSeq" id="NP_110243.1">
    <property type="nucleotide sequence ID" value="NC_000912.1"/>
</dbReference>
<dbReference type="RefSeq" id="WP_010874911.1">
    <property type="nucleotide sequence ID" value="NZ_OU342337.1"/>
</dbReference>
<dbReference type="PDB" id="2HQL">
    <property type="method" value="X-ray"/>
    <property type="resolution" value="2.00 A"/>
    <property type="chains" value="A/B/C/D/E/F=1-104"/>
</dbReference>
<dbReference type="PDBsum" id="2HQL"/>
<dbReference type="SMR" id="P75224"/>
<dbReference type="STRING" id="272634.MPN_554"/>
<dbReference type="EnsemblBacteria" id="AAB95936">
    <property type="protein sequence ID" value="AAB95936"/>
    <property type="gene ID" value="MPN_554"/>
</dbReference>
<dbReference type="KEGG" id="mpn:MPN_554"/>
<dbReference type="PATRIC" id="fig|272634.6.peg.616"/>
<dbReference type="HOGENOM" id="CLU_2330709_0_0_14"/>
<dbReference type="OrthoDB" id="399263at2"/>
<dbReference type="BioCyc" id="MPNE272634:G1GJ3-910-MONOMER"/>
<dbReference type="EvolutionaryTrace" id="P75224"/>
<dbReference type="Proteomes" id="UP000000808">
    <property type="component" value="Chromosome"/>
</dbReference>
<dbReference type="Gene3D" id="2.40.50.140">
    <property type="entry name" value="Nucleic acid-binding proteins"/>
    <property type="match status" value="1"/>
</dbReference>
<dbReference type="InterPro" id="IPR024506">
    <property type="entry name" value="DUF3217"/>
</dbReference>
<dbReference type="InterPro" id="IPR012340">
    <property type="entry name" value="NA-bd_OB-fold"/>
</dbReference>
<dbReference type="Pfam" id="PF11506">
    <property type="entry name" value="DUF3217"/>
    <property type="match status" value="1"/>
</dbReference>
<accession>P75224</accession>